<gene>
    <name type="primary">TUBD1</name>
    <name type="synonym">TUBD</name>
</gene>
<feature type="chain" id="PRO_0000048483" description="Tubulin delta chain">
    <location>
        <begin position="1"/>
        <end position="453"/>
    </location>
</feature>
<feature type="binding site" evidence="2">
    <location>
        <begin position="143"/>
        <end position="149"/>
    </location>
    <ligand>
        <name>GTP</name>
        <dbReference type="ChEBI" id="CHEBI:37565"/>
    </ligand>
</feature>
<name>TBD_CANLF</name>
<evidence type="ECO:0000250" key="1">
    <source>
        <dbReference type="UniProtKB" id="Q9R1K7"/>
    </source>
</evidence>
<evidence type="ECO:0000255" key="2"/>
<evidence type="ECO:0000305" key="3"/>
<reference key="1">
    <citation type="journal article" date="2002" name="Anim. Genet.">
        <title>Cloning of the canine delta tubulin cDNA (TUBD) and mapping to CFA9.</title>
        <authorList>
            <person name="Sidjanin D.J."/>
            <person name="Zangerl B."/>
            <person name="Johnson J.L."/>
            <person name="Xue F."/>
            <person name="Mellersh C."/>
            <person name="Ostrander E.A."/>
            <person name="Acland G.M."/>
            <person name="Aguirre G.D."/>
        </authorList>
    </citation>
    <scope>NUCLEOTIDE SEQUENCE [MRNA]</scope>
</reference>
<keyword id="KW-0966">Cell projection</keyword>
<keyword id="KW-0970">Cilium biogenesis/degradation</keyword>
<keyword id="KW-0963">Cytoplasm</keyword>
<keyword id="KW-0206">Cytoskeleton</keyword>
<keyword id="KW-0217">Developmental protein</keyword>
<keyword id="KW-0342">GTP-binding</keyword>
<keyword id="KW-0493">Microtubule</keyword>
<keyword id="KW-0547">Nucleotide-binding</keyword>
<keyword id="KW-0539">Nucleus</keyword>
<keyword id="KW-1185">Reference proteome</keyword>
<organism>
    <name type="scientific">Canis lupus familiaris</name>
    <name type="common">Dog</name>
    <name type="synonym">Canis familiaris</name>
    <dbReference type="NCBI Taxonomy" id="9615"/>
    <lineage>
        <taxon>Eukaryota</taxon>
        <taxon>Metazoa</taxon>
        <taxon>Chordata</taxon>
        <taxon>Craniata</taxon>
        <taxon>Vertebrata</taxon>
        <taxon>Euteleostomi</taxon>
        <taxon>Mammalia</taxon>
        <taxon>Eutheria</taxon>
        <taxon>Laurasiatheria</taxon>
        <taxon>Carnivora</taxon>
        <taxon>Caniformia</taxon>
        <taxon>Canidae</taxon>
        <taxon>Canis</taxon>
    </lineage>
</organism>
<dbReference type="EMBL" id="AF416724">
    <property type="protein sequence ID" value="AAN32643.1"/>
    <property type="molecule type" value="mRNA"/>
</dbReference>
<dbReference type="RefSeq" id="NP_001003024.1">
    <property type="nucleotide sequence ID" value="NM_001003024.1"/>
</dbReference>
<dbReference type="RefSeq" id="XP_005624378.1">
    <property type="nucleotide sequence ID" value="XM_005624321.2"/>
</dbReference>
<dbReference type="RefSeq" id="XP_013971935.1">
    <property type="nucleotide sequence ID" value="XM_014116460.1"/>
</dbReference>
<dbReference type="SMR" id="Q8HZV4"/>
<dbReference type="FunCoup" id="Q8HZV4">
    <property type="interactions" value="13"/>
</dbReference>
<dbReference type="STRING" id="9615.ENSCAFP00000052240"/>
<dbReference type="PaxDb" id="9612-ENSCAFP00000033984"/>
<dbReference type="Ensembl" id="ENSCAFT00000028018.5">
    <property type="protein sequence ID" value="ENSCAFP00000026060.3"/>
    <property type="gene ID" value="ENSCAFG00000017668.6"/>
</dbReference>
<dbReference type="Ensembl" id="ENSCAFT00030008426.1">
    <property type="protein sequence ID" value="ENSCAFP00030007401.1"/>
    <property type="gene ID" value="ENSCAFG00030004436.1"/>
</dbReference>
<dbReference type="Ensembl" id="ENSCAFT00040003000.1">
    <property type="protein sequence ID" value="ENSCAFP00040002593.1"/>
    <property type="gene ID" value="ENSCAFG00040001537.1"/>
</dbReference>
<dbReference type="Ensembl" id="ENSCAFT00845045938.1">
    <property type="protein sequence ID" value="ENSCAFP00845036064.1"/>
    <property type="gene ID" value="ENSCAFG00845025976.1"/>
</dbReference>
<dbReference type="GeneID" id="403546"/>
<dbReference type="KEGG" id="cfa:403546"/>
<dbReference type="CTD" id="51174"/>
<dbReference type="VEuPathDB" id="HostDB:ENSCAFG00845025976"/>
<dbReference type="VGNC" id="VGNC:47992">
    <property type="gene designation" value="TUBD1"/>
</dbReference>
<dbReference type="eggNOG" id="KOG1374">
    <property type="taxonomic scope" value="Eukaryota"/>
</dbReference>
<dbReference type="GeneTree" id="ENSGT00940000157069"/>
<dbReference type="HOGENOM" id="CLU_015718_1_0_1"/>
<dbReference type="InParanoid" id="Q8HZV4"/>
<dbReference type="OMA" id="ACHPEYK"/>
<dbReference type="OrthoDB" id="10250004at2759"/>
<dbReference type="TreeFam" id="TF329833"/>
<dbReference type="Proteomes" id="UP000002254">
    <property type="component" value="Chromosome 9"/>
</dbReference>
<dbReference type="Proteomes" id="UP000694429">
    <property type="component" value="Chromosome 9"/>
</dbReference>
<dbReference type="Proteomes" id="UP000694542">
    <property type="component" value="Chromosome 9"/>
</dbReference>
<dbReference type="Proteomes" id="UP000805418">
    <property type="component" value="Chromosome 9"/>
</dbReference>
<dbReference type="Bgee" id="ENSCAFG00000017668">
    <property type="expression patterns" value="Expressed in saliva-secreting gland and 46 other cell types or tissues"/>
</dbReference>
<dbReference type="GO" id="GO:0005814">
    <property type="term" value="C:centriole"/>
    <property type="evidence" value="ECO:0007669"/>
    <property type="project" value="UniProtKB-SubCell"/>
</dbReference>
<dbReference type="GO" id="GO:0005929">
    <property type="term" value="C:cilium"/>
    <property type="evidence" value="ECO:0007669"/>
    <property type="project" value="UniProtKB-SubCell"/>
</dbReference>
<dbReference type="GO" id="GO:0005737">
    <property type="term" value="C:cytoplasm"/>
    <property type="evidence" value="ECO:0000318"/>
    <property type="project" value="GO_Central"/>
</dbReference>
<dbReference type="GO" id="GO:0005829">
    <property type="term" value="C:cytosol"/>
    <property type="evidence" value="ECO:0007669"/>
    <property type="project" value="Ensembl"/>
</dbReference>
<dbReference type="GO" id="GO:0005874">
    <property type="term" value="C:microtubule"/>
    <property type="evidence" value="ECO:0000318"/>
    <property type="project" value="GO_Central"/>
</dbReference>
<dbReference type="GO" id="GO:0005654">
    <property type="term" value="C:nucleoplasm"/>
    <property type="evidence" value="ECO:0007669"/>
    <property type="project" value="Ensembl"/>
</dbReference>
<dbReference type="GO" id="GO:0005525">
    <property type="term" value="F:GTP binding"/>
    <property type="evidence" value="ECO:0000318"/>
    <property type="project" value="GO_Central"/>
</dbReference>
<dbReference type="GO" id="GO:0005200">
    <property type="term" value="F:structural constituent of cytoskeleton"/>
    <property type="evidence" value="ECO:0000318"/>
    <property type="project" value="GO_Central"/>
</dbReference>
<dbReference type="GO" id="GO:0030030">
    <property type="term" value="P:cell projection organization"/>
    <property type="evidence" value="ECO:0007669"/>
    <property type="project" value="UniProtKB-KW"/>
</dbReference>
<dbReference type="GO" id="GO:0000226">
    <property type="term" value="P:microtubule cytoskeleton organization"/>
    <property type="evidence" value="ECO:0000318"/>
    <property type="project" value="GO_Central"/>
</dbReference>
<dbReference type="GO" id="GO:0000278">
    <property type="term" value="P:mitotic cell cycle"/>
    <property type="evidence" value="ECO:0000318"/>
    <property type="project" value="GO_Central"/>
</dbReference>
<dbReference type="GO" id="GO:0045880">
    <property type="term" value="P:positive regulation of smoothened signaling pathway"/>
    <property type="evidence" value="ECO:0000250"/>
    <property type="project" value="UniProtKB"/>
</dbReference>
<dbReference type="CDD" id="cd02189">
    <property type="entry name" value="delta_zeta_tubulin-like"/>
    <property type="match status" value="1"/>
</dbReference>
<dbReference type="FunFam" id="1.10.287.600:FF:000010">
    <property type="entry name" value="Tubulin delta chain"/>
    <property type="match status" value="1"/>
</dbReference>
<dbReference type="FunFam" id="3.40.50.1440:FF:000021">
    <property type="entry name" value="Tubulin delta chain"/>
    <property type="match status" value="1"/>
</dbReference>
<dbReference type="Gene3D" id="3.40.50.1440">
    <property type="entry name" value="Tubulin/FtsZ, GTPase domain"/>
    <property type="match status" value="1"/>
</dbReference>
<dbReference type="InterPro" id="IPR002967">
    <property type="entry name" value="Delta_tubulin"/>
</dbReference>
<dbReference type="InterPro" id="IPR008280">
    <property type="entry name" value="Tub_FtsZ_C"/>
</dbReference>
<dbReference type="InterPro" id="IPR000217">
    <property type="entry name" value="Tubulin"/>
</dbReference>
<dbReference type="InterPro" id="IPR036525">
    <property type="entry name" value="Tubulin/FtsZ_GTPase_sf"/>
</dbReference>
<dbReference type="InterPro" id="IPR017975">
    <property type="entry name" value="Tubulin_CS"/>
</dbReference>
<dbReference type="InterPro" id="IPR003008">
    <property type="entry name" value="Tubulin_FtsZ_GTPase"/>
</dbReference>
<dbReference type="PANTHER" id="PTHR11588">
    <property type="entry name" value="TUBULIN"/>
    <property type="match status" value="1"/>
</dbReference>
<dbReference type="Pfam" id="PF00091">
    <property type="entry name" value="Tubulin"/>
    <property type="match status" value="1"/>
</dbReference>
<dbReference type="PRINTS" id="PR01224">
    <property type="entry name" value="DELTATUBULIN"/>
</dbReference>
<dbReference type="PRINTS" id="PR01161">
    <property type="entry name" value="TUBULIN"/>
</dbReference>
<dbReference type="SMART" id="SM00864">
    <property type="entry name" value="Tubulin"/>
    <property type="match status" value="1"/>
</dbReference>
<dbReference type="SUPFAM" id="SSF55307">
    <property type="entry name" value="Tubulin C-terminal domain-like"/>
    <property type="match status" value="1"/>
</dbReference>
<dbReference type="SUPFAM" id="SSF52490">
    <property type="entry name" value="Tubulin nucleotide-binding domain-like"/>
    <property type="match status" value="1"/>
</dbReference>
<dbReference type="PROSITE" id="PS00227">
    <property type="entry name" value="TUBULIN"/>
    <property type="match status" value="1"/>
</dbReference>
<accession>Q8HZV4</accession>
<sequence>MSVVTVQLGQCGNQIGFEVFDALYSDSHCPQGLCSERENEAYQASSKERFFSEEENGVSIARAVLVDMEPKVINQTLSKAAQSGQWKYAQHSCFCQKEGSGNNWAYGYSVHGPRHEESIMNLIQKEVEKCDSLSGFFIIMSMAGGTGSGLGAFVTQNLQDQYSNSLKMNQIIWPYGTGEVIVQNYNSVLTLSHLYRSSDALLVHENDAIHKICAKLMNIKQISFSDINQVLAHQLGSVFQPTYSVEGSCHYRRNPLGDLMENLVPHPEFKMLGIRNIPQMSENSLTYSTFTWAGLLKHLRQMLISNSKMEEGINWQVRPPLPGLPTLGKVSLNRELHFNTSIANLVILRGKDVHSADLGGFKDPALYTSWLEPIDAFNVWKTQRAFSKYEKSAALVSNSQFLLKPLDTIVGKAWNMFASKAYIHQYTKFGIEEEDFLDSFTLLEQVVASYCNL</sequence>
<comment type="function">
    <text evidence="1">Acts as a positive regulator of hedgehog signaling and regulates ciliary function.</text>
</comment>
<comment type="subunit">
    <text evidence="1">Found in a complex with TEDC1, TEDC2, TUBE1 and TUBD1.</text>
</comment>
<comment type="subcellular location">
    <subcellularLocation>
        <location evidence="1">Nucleus</location>
    </subcellularLocation>
    <subcellularLocation>
        <location evidence="1">Cytoplasm</location>
    </subcellularLocation>
    <subcellularLocation>
        <location evidence="1">Cytoplasm</location>
        <location evidence="1">Cytoskeleton</location>
        <location evidence="1">Microtubule organizing center</location>
        <location evidence="1">Centrosome</location>
        <location evidence="1">Centriole</location>
    </subcellularLocation>
    <subcellularLocation>
        <location evidence="1">Cell projection</location>
        <location evidence="1">Cilium</location>
    </subcellularLocation>
    <text evidence="1">Associated with centrioles. Both cytoplasmic and nuclear. In the elongating spermatid it is associated with the manchette, a specialized microtubule system present during reshaping of the sperm head.</text>
</comment>
<comment type="similarity">
    <text evidence="3">Belongs to the tubulin family.</text>
</comment>
<protein>
    <recommendedName>
        <fullName>Tubulin delta chain</fullName>
    </recommendedName>
    <alternativeName>
        <fullName>Delta-tubulin</fullName>
    </alternativeName>
</protein>
<proteinExistence type="evidence at transcript level"/>